<protein>
    <recommendedName>
        <fullName evidence="2">U6-hexatoxin-Hi1a</fullName>
        <shortName evidence="2">U6-HXTX-Hi1a</shortName>
    </recommendedName>
    <alternativeName>
        <fullName evidence="2">SF8 peptide</fullName>
    </alternativeName>
</protein>
<keyword id="KW-0165">Cleavage on pair of basic residues</keyword>
<keyword id="KW-1015">Disulfide bond</keyword>
<keyword id="KW-0872">Ion channel impairing toxin</keyword>
<keyword id="KW-0964">Secreted</keyword>
<keyword id="KW-0732">Signal</keyword>
<keyword id="KW-0800">Toxin</keyword>
<dbReference type="EMBL" id="HACE01000034">
    <property type="protein sequence ID" value="CDZ18818.1"/>
    <property type="molecule type" value="mRNA"/>
</dbReference>
<dbReference type="SMR" id="A0A1D0BNA3"/>
<dbReference type="GO" id="GO:0005576">
    <property type="term" value="C:extracellular region"/>
    <property type="evidence" value="ECO:0007669"/>
    <property type="project" value="UniProtKB-SubCell"/>
</dbReference>
<dbReference type="GO" id="GO:0019871">
    <property type="term" value="F:sodium channel inhibitor activity"/>
    <property type="evidence" value="ECO:0007669"/>
    <property type="project" value="InterPro"/>
</dbReference>
<dbReference type="GO" id="GO:0090729">
    <property type="term" value="F:toxin activity"/>
    <property type="evidence" value="ECO:0007669"/>
    <property type="project" value="UniProtKB-KW"/>
</dbReference>
<dbReference type="InterPro" id="IPR012627">
    <property type="entry name" value="Toxin_22"/>
</dbReference>
<dbReference type="Pfam" id="PF08092">
    <property type="entry name" value="Toxin_22"/>
    <property type="match status" value="1"/>
</dbReference>
<reference key="1">
    <citation type="journal article" date="2020" name="Proc. Natl. Acad. Sci. U.S.A.">
        <title>Structural venomics reveals evolution of a complex venom by duplication and diversification of an ancient peptide-encoding gene.</title>
        <authorList>
            <person name="Pineda S.S."/>
            <person name="Chin Y.K."/>
            <person name="Undheim E.A.B."/>
            <person name="Senff S."/>
            <person name="Mobli M."/>
            <person name="Dauly C."/>
            <person name="Escoubas P."/>
            <person name="Nicholson G.M."/>
            <person name="Kaas Q."/>
            <person name="Guo S."/>
            <person name="Herzig V."/>
            <person name="Mattick J.S."/>
            <person name="King G.F."/>
        </authorList>
    </citation>
    <scope>NUCLEOTIDE SEQUENCE [MRNA]</scope>
    <source>
        <tissue>Venom gland</tissue>
    </source>
</reference>
<reference evidence="5" key="2">
    <citation type="thesis" date="2012" institute="The University of Queensland" country="Australia">
        <title>Probing the chemical diversity of venom from the Australian Funnel-web spider Hadronyche infensa.</title>
        <authorList>
            <person name="Pineda S.S."/>
        </authorList>
    </citation>
    <scope>NUCLEOTIDE SEQUENCE [MRNA]</scope>
    <source>
        <tissue>Venom gland</tissue>
    </source>
</reference>
<reference evidence="5" key="3">
    <citation type="submission" date="2014-07" db="EMBL/GenBank/DDBJ databases">
        <authorList>
            <person name="Zhang J.E."/>
            <person name="Yang H."/>
            <person name="Guo J."/>
            <person name="Deng Z."/>
            <person name="Luo H."/>
            <person name="Luo M."/>
            <person name="Zhao B."/>
        </authorList>
    </citation>
    <scope>NUCLEOTIDE SEQUENCE [MRNA]</scope>
    <source>
        <tissue>Venom gland</tissue>
    </source>
</reference>
<name>T61A_HADIN</name>
<feature type="signal peptide" evidence="1">
    <location>
        <begin position="1"/>
        <end position="18"/>
    </location>
</feature>
<feature type="propeptide" id="PRO_0000459668" evidence="4">
    <location>
        <begin position="19"/>
        <end position="67"/>
    </location>
</feature>
<feature type="chain" id="PRO_5008897002" description="U6-hexatoxin-Hi1a" evidence="4">
    <location>
        <begin position="68"/>
        <end position="109"/>
    </location>
</feature>
<feature type="disulfide bond" evidence="4">
    <location>
        <begin position="68"/>
        <end position="83"/>
    </location>
</feature>
<feature type="disulfide bond" evidence="4">
    <location>
        <begin position="75"/>
        <end position="88"/>
    </location>
</feature>
<feature type="disulfide bond" evidence="4">
    <location>
        <begin position="82"/>
        <end position="103"/>
    </location>
</feature>
<sequence>MKITIFCLTILTLSITFGETNEDVKDGSLKEMDEMSLLQELMSVEAALVEKEMKAEAEENRDSREKRCWGLNVPCENENSPCCKPYVCEKTTGYGWWYKSPYCVRKGSG</sequence>
<accession>A0A1D0BNA3</accession>
<proteinExistence type="inferred from homology"/>
<evidence type="ECO:0000255" key="1"/>
<evidence type="ECO:0000303" key="2">
    <source>
    </source>
</evidence>
<evidence type="ECO:0000305" key="3"/>
<evidence type="ECO:0000305" key="4">
    <source>
    </source>
</evidence>
<evidence type="ECO:0000312" key="5">
    <source>
        <dbReference type="EMBL" id="CDZ18818.1"/>
    </source>
</evidence>
<comment type="function">
    <text evidence="4">Probable ion channel inhibitor.</text>
</comment>
<comment type="subcellular location">
    <subcellularLocation>
        <location evidence="4">Secreted</location>
    </subcellularLocation>
</comment>
<comment type="tissue specificity">
    <text evidence="4">Expressed by the venom gland.</text>
</comment>
<comment type="domain">
    <text evidence="3">The presence of a 'disulfide through disulfide knot' structurally defines this protein as a knottin.</text>
</comment>
<comment type="similarity">
    <text evidence="3">Belongs to the neurotoxin 14 (magi-1) family. 07 (Jztx-56) subfamily.</text>
</comment>
<organism>
    <name type="scientific">Hadronyche infensa</name>
    <name type="common">Fraser island funnel-web spider</name>
    <name type="synonym">Atrax infensus</name>
    <dbReference type="NCBI Taxonomy" id="153481"/>
    <lineage>
        <taxon>Eukaryota</taxon>
        <taxon>Metazoa</taxon>
        <taxon>Ecdysozoa</taxon>
        <taxon>Arthropoda</taxon>
        <taxon>Chelicerata</taxon>
        <taxon>Arachnida</taxon>
        <taxon>Araneae</taxon>
        <taxon>Mygalomorphae</taxon>
        <taxon>Hexathelidae</taxon>
        <taxon>Hadronyche</taxon>
    </lineage>
</organism>